<accession>Q9LX47</accession>
<feature type="chain" id="PRO_0000281967" description="Putative F-box/FBD/LRR-repeat protein At3g59240">
    <location>
        <begin position="1"/>
        <end position="504"/>
    </location>
</feature>
<feature type="domain" description="F-box">
    <location>
        <begin position="7"/>
        <end position="60"/>
    </location>
</feature>
<feature type="repeat" description="LRR 1">
    <location>
        <begin position="69"/>
        <end position="95"/>
    </location>
</feature>
<feature type="repeat" description="LRR 2">
    <location>
        <begin position="145"/>
        <end position="171"/>
    </location>
</feature>
<feature type="repeat" description="LRR 3">
    <location>
        <begin position="173"/>
        <end position="198"/>
    </location>
</feature>
<feature type="repeat" description="LRR 4">
    <location>
        <begin position="286"/>
        <end position="312"/>
    </location>
</feature>
<feature type="repeat" description="LRR 5">
    <location>
        <begin position="329"/>
        <end position="354"/>
    </location>
</feature>
<feature type="repeat" description="LRR 6">
    <location>
        <begin position="369"/>
        <end position="396"/>
    </location>
</feature>
<feature type="domain" description="FBD">
    <location>
        <begin position="382"/>
        <end position="427"/>
    </location>
</feature>
<feature type="repeat" description="LRR 7">
    <location>
        <begin position="403"/>
        <end position="428"/>
    </location>
</feature>
<gene>
    <name type="ordered locus">At3g59240</name>
    <name type="ORF">F25L23.100</name>
</gene>
<organism>
    <name type="scientific">Arabidopsis thaliana</name>
    <name type="common">Mouse-ear cress</name>
    <dbReference type="NCBI Taxonomy" id="3702"/>
    <lineage>
        <taxon>Eukaryota</taxon>
        <taxon>Viridiplantae</taxon>
        <taxon>Streptophyta</taxon>
        <taxon>Embryophyta</taxon>
        <taxon>Tracheophyta</taxon>
        <taxon>Spermatophyta</taxon>
        <taxon>Magnoliopsida</taxon>
        <taxon>eudicotyledons</taxon>
        <taxon>Gunneridae</taxon>
        <taxon>Pentapetalae</taxon>
        <taxon>rosids</taxon>
        <taxon>malvids</taxon>
        <taxon>Brassicales</taxon>
        <taxon>Brassicaceae</taxon>
        <taxon>Camelineae</taxon>
        <taxon>Arabidopsis</taxon>
    </lineage>
</organism>
<proteinExistence type="predicted"/>
<dbReference type="EMBL" id="AL356014">
    <property type="protein sequence ID" value="CAB91594.1"/>
    <property type="molecule type" value="Genomic_DNA"/>
</dbReference>
<dbReference type="EMBL" id="CP002686">
    <property type="protein sequence ID" value="AEE79895.1"/>
    <property type="molecule type" value="Genomic_DNA"/>
</dbReference>
<dbReference type="PIR" id="T48992">
    <property type="entry name" value="T48992"/>
</dbReference>
<dbReference type="RefSeq" id="NP_191483.1">
    <property type="nucleotide sequence ID" value="NM_115786.1"/>
</dbReference>
<dbReference type="FunCoup" id="Q9LX47">
    <property type="interactions" value="370"/>
</dbReference>
<dbReference type="PaxDb" id="3702-AT3G59240.1"/>
<dbReference type="EnsemblPlants" id="AT3G59240.1">
    <property type="protein sequence ID" value="AT3G59240.1"/>
    <property type="gene ID" value="AT3G59240"/>
</dbReference>
<dbReference type="GeneID" id="825093"/>
<dbReference type="Gramene" id="AT3G59240.1">
    <property type="protein sequence ID" value="AT3G59240.1"/>
    <property type="gene ID" value="AT3G59240"/>
</dbReference>
<dbReference type="KEGG" id="ath:AT3G59240"/>
<dbReference type="Araport" id="AT3G59240"/>
<dbReference type="TAIR" id="AT3G59240"/>
<dbReference type="HOGENOM" id="CLU_010721_7_4_1"/>
<dbReference type="InParanoid" id="Q9LX47"/>
<dbReference type="OMA" id="CIFRWIS"/>
<dbReference type="PhylomeDB" id="Q9LX47"/>
<dbReference type="PRO" id="PR:Q9LX47"/>
<dbReference type="Proteomes" id="UP000006548">
    <property type="component" value="Chromosome 3"/>
</dbReference>
<dbReference type="ExpressionAtlas" id="Q9LX47">
    <property type="expression patterns" value="baseline"/>
</dbReference>
<dbReference type="CDD" id="cd22160">
    <property type="entry name" value="F-box_AtFBL13-like"/>
    <property type="match status" value="1"/>
</dbReference>
<dbReference type="Gene3D" id="3.80.10.10">
    <property type="entry name" value="Ribonuclease Inhibitor"/>
    <property type="match status" value="1"/>
</dbReference>
<dbReference type="InterPro" id="IPR036047">
    <property type="entry name" value="F-box-like_dom_sf"/>
</dbReference>
<dbReference type="InterPro" id="IPR053781">
    <property type="entry name" value="F-box_AtFBL13-like"/>
</dbReference>
<dbReference type="InterPro" id="IPR001810">
    <property type="entry name" value="F-box_dom"/>
</dbReference>
<dbReference type="InterPro" id="IPR006566">
    <property type="entry name" value="FBD"/>
</dbReference>
<dbReference type="InterPro" id="IPR055294">
    <property type="entry name" value="FBL60-like"/>
</dbReference>
<dbReference type="InterPro" id="IPR032675">
    <property type="entry name" value="LRR_dom_sf"/>
</dbReference>
<dbReference type="InterPro" id="IPR055411">
    <property type="entry name" value="LRR_FXL15/At3g58940/PEG3-like"/>
</dbReference>
<dbReference type="PANTHER" id="PTHR31293">
    <property type="entry name" value="RNI-LIKE SUPERFAMILY PROTEIN"/>
    <property type="match status" value="1"/>
</dbReference>
<dbReference type="PANTHER" id="PTHR31293:SF16">
    <property type="entry name" value="RNI-LIKE SUPERFAMILY PROTEIN"/>
    <property type="match status" value="1"/>
</dbReference>
<dbReference type="Pfam" id="PF00646">
    <property type="entry name" value="F-box"/>
    <property type="match status" value="1"/>
</dbReference>
<dbReference type="Pfam" id="PF24758">
    <property type="entry name" value="LRR_At5g56370"/>
    <property type="match status" value="1"/>
</dbReference>
<dbReference type="SMART" id="SM00579">
    <property type="entry name" value="FBD"/>
    <property type="match status" value="1"/>
</dbReference>
<dbReference type="SUPFAM" id="SSF81383">
    <property type="entry name" value="F-box domain"/>
    <property type="match status" value="1"/>
</dbReference>
<dbReference type="SUPFAM" id="SSF52058">
    <property type="entry name" value="L domain-like"/>
    <property type="match status" value="1"/>
</dbReference>
<name>FDL46_ARATH</name>
<protein>
    <recommendedName>
        <fullName>Putative F-box/FBD/LRR-repeat protein At3g59240</fullName>
    </recommendedName>
</protein>
<keyword id="KW-0433">Leucine-rich repeat</keyword>
<keyword id="KW-1185">Reference proteome</keyword>
<keyword id="KW-0677">Repeat</keyword>
<sequence length="504" mass="57368">MDDICCKDIISDLPEALICHLLSFVPTKEAALTSLLSEKWRYLFAFAPILDFDDSVWMQSPLVYMNEVHRKFMDFVDRVLGLQGNSTLVRFSLNCRNGIDRECIFRWISNVIERGVSDLDLGGNFVSNRSMPSSVFVSKSLVKLRIRTENCTIIDLEDVFLPKLKTLDLSSIWFRDGDTCLLKLISGCQVLEDLTMSDLWWDGYWNRSMSSKTLKRLTVHCSDWDRSPGSISFDTPNLVYFEYFDLVADKYEVVNFDSLVEASIGLRMRHHQRAHASYGDLVVNATNLFMGISNVRILQLFSNALEVLTFCCAPIPVFKKLIHLTVETDKDVGWESLPALLKNCPNLETLVFKGLHHRSTSKCQDTDGCLCKSSKDIRSCLSSSPVKVLKILKFGEVASYFGDEEKQLELVKYFLETMPNLEQMILHYNTRISEGVKSQLDWLVPRVSSSKCSVQLICDNAPTYPFYGGIICDNFITPAPTYPFFGDPLHGMVIPYMGDQPHFI</sequence>
<reference key="1">
    <citation type="journal article" date="2000" name="Nature">
        <title>Sequence and analysis of chromosome 3 of the plant Arabidopsis thaliana.</title>
        <authorList>
            <person name="Salanoubat M."/>
            <person name="Lemcke K."/>
            <person name="Rieger M."/>
            <person name="Ansorge W."/>
            <person name="Unseld M."/>
            <person name="Fartmann B."/>
            <person name="Valle G."/>
            <person name="Bloecker H."/>
            <person name="Perez-Alonso M."/>
            <person name="Obermaier B."/>
            <person name="Delseny M."/>
            <person name="Boutry M."/>
            <person name="Grivell L.A."/>
            <person name="Mache R."/>
            <person name="Puigdomenech P."/>
            <person name="De Simone V."/>
            <person name="Choisne N."/>
            <person name="Artiguenave F."/>
            <person name="Robert C."/>
            <person name="Brottier P."/>
            <person name="Wincker P."/>
            <person name="Cattolico L."/>
            <person name="Weissenbach J."/>
            <person name="Saurin W."/>
            <person name="Quetier F."/>
            <person name="Schaefer M."/>
            <person name="Mueller-Auer S."/>
            <person name="Gabel C."/>
            <person name="Fuchs M."/>
            <person name="Benes V."/>
            <person name="Wurmbach E."/>
            <person name="Drzonek H."/>
            <person name="Erfle H."/>
            <person name="Jordan N."/>
            <person name="Bangert S."/>
            <person name="Wiedelmann R."/>
            <person name="Kranz H."/>
            <person name="Voss H."/>
            <person name="Holland R."/>
            <person name="Brandt P."/>
            <person name="Nyakatura G."/>
            <person name="Vezzi A."/>
            <person name="D'Angelo M."/>
            <person name="Pallavicini A."/>
            <person name="Toppo S."/>
            <person name="Simionati B."/>
            <person name="Conrad A."/>
            <person name="Hornischer K."/>
            <person name="Kauer G."/>
            <person name="Loehnert T.-H."/>
            <person name="Nordsiek G."/>
            <person name="Reichelt J."/>
            <person name="Scharfe M."/>
            <person name="Schoen O."/>
            <person name="Bargues M."/>
            <person name="Terol J."/>
            <person name="Climent J."/>
            <person name="Navarro P."/>
            <person name="Collado C."/>
            <person name="Perez-Perez A."/>
            <person name="Ottenwaelder B."/>
            <person name="Duchemin D."/>
            <person name="Cooke R."/>
            <person name="Laudie M."/>
            <person name="Berger-Llauro C."/>
            <person name="Purnelle B."/>
            <person name="Masuy D."/>
            <person name="de Haan M."/>
            <person name="Maarse A.C."/>
            <person name="Alcaraz J.-P."/>
            <person name="Cottet A."/>
            <person name="Casacuberta E."/>
            <person name="Monfort A."/>
            <person name="Argiriou A."/>
            <person name="Flores M."/>
            <person name="Liguori R."/>
            <person name="Vitale D."/>
            <person name="Mannhaupt G."/>
            <person name="Haase D."/>
            <person name="Schoof H."/>
            <person name="Rudd S."/>
            <person name="Zaccaria P."/>
            <person name="Mewes H.-W."/>
            <person name="Mayer K.F.X."/>
            <person name="Kaul S."/>
            <person name="Town C.D."/>
            <person name="Koo H.L."/>
            <person name="Tallon L.J."/>
            <person name="Jenkins J."/>
            <person name="Rooney T."/>
            <person name="Rizzo M."/>
            <person name="Walts A."/>
            <person name="Utterback T."/>
            <person name="Fujii C.Y."/>
            <person name="Shea T.P."/>
            <person name="Creasy T.H."/>
            <person name="Haas B."/>
            <person name="Maiti R."/>
            <person name="Wu D."/>
            <person name="Peterson J."/>
            <person name="Van Aken S."/>
            <person name="Pai G."/>
            <person name="Militscher J."/>
            <person name="Sellers P."/>
            <person name="Gill J.E."/>
            <person name="Feldblyum T.V."/>
            <person name="Preuss D."/>
            <person name="Lin X."/>
            <person name="Nierman W.C."/>
            <person name="Salzberg S.L."/>
            <person name="White O."/>
            <person name="Venter J.C."/>
            <person name="Fraser C.M."/>
            <person name="Kaneko T."/>
            <person name="Nakamura Y."/>
            <person name="Sato S."/>
            <person name="Kato T."/>
            <person name="Asamizu E."/>
            <person name="Sasamoto S."/>
            <person name="Kimura T."/>
            <person name="Idesawa K."/>
            <person name="Kawashima K."/>
            <person name="Kishida Y."/>
            <person name="Kiyokawa C."/>
            <person name="Kohara M."/>
            <person name="Matsumoto M."/>
            <person name="Matsuno A."/>
            <person name="Muraki A."/>
            <person name="Nakayama S."/>
            <person name="Nakazaki N."/>
            <person name="Shinpo S."/>
            <person name="Takeuchi C."/>
            <person name="Wada T."/>
            <person name="Watanabe A."/>
            <person name="Yamada M."/>
            <person name="Yasuda M."/>
            <person name="Tabata S."/>
        </authorList>
    </citation>
    <scope>NUCLEOTIDE SEQUENCE [LARGE SCALE GENOMIC DNA]</scope>
    <source>
        <strain>cv. Columbia</strain>
    </source>
</reference>
<reference key="2">
    <citation type="journal article" date="2017" name="Plant J.">
        <title>Araport11: a complete reannotation of the Arabidopsis thaliana reference genome.</title>
        <authorList>
            <person name="Cheng C.Y."/>
            <person name="Krishnakumar V."/>
            <person name="Chan A.P."/>
            <person name="Thibaud-Nissen F."/>
            <person name="Schobel S."/>
            <person name="Town C.D."/>
        </authorList>
    </citation>
    <scope>GENOME REANNOTATION</scope>
    <source>
        <strain>cv. Columbia</strain>
    </source>
</reference>